<name>HEMTM_RIFPA</name>
<feature type="chain" id="PRO_0000343355" description="Myohemerythrin">
    <location>
        <begin position="1"/>
        <end position="120"/>
    </location>
</feature>
<feature type="binding site" evidence="2">
    <location>
        <position position="26"/>
    </location>
    <ligand>
        <name>Fe cation</name>
        <dbReference type="ChEBI" id="CHEBI:24875"/>
        <label>1</label>
    </ligand>
</feature>
<feature type="binding site" evidence="2">
    <location>
        <position position="56"/>
    </location>
    <ligand>
        <name>Fe cation</name>
        <dbReference type="ChEBI" id="CHEBI:24875"/>
        <label>1</label>
    </ligand>
</feature>
<feature type="binding site" evidence="2">
    <location>
        <position position="60"/>
    </location>
    <ligand>
        <name>Fe cation</name>
        <dbReference type="ChEBI" id="CHEBI:24875"/>
        <label>1</label>
    </ligand>
</feature>
<feature type="binding site" evidence="2">
    <location>
        <position position="60"/>
    </location>
    <ligand>
        <name>Fe cation</name>
        <dbReference type="ChEBI" id="CHEBI:24875"/>
        <label>2</label>
    </ligand>
</feature>
<feature type="binding site" evidence="2">
    <location>
        <position position="75"/>
    </location>
    <ligand>
        <name>Fe cation</name>
        <dbReference type="ChEBI" id="CHEBI:24875"/>
        <label>2</label>
    </ligand>
</feature>
<feature type="binding site" evidence="2">
    <location>
        <position position="79"/>
    </location>
    <ligand>
        <name>Fe cation</name>
        <dbReference type="ChEBI" id="CHEBI:24875"/>
        <label>2</label>
    </ligand>
</feature>
<feature type="binding site" evidence="2">
    <location>
        <position position="108"/>
    </location>
    <ligand>
        <name>Fe cation</name>
        <dbReference type="ChEBI" id="CHEBI:24875"/>
        <label>2</label>
    </ligand>
</feature>
<feature type="binding site" evidence="2">
    <location>
        <position position="113"/>
    </location>
    <ligand>
        <name>Fe cation</name>
        <dbReference type="ChEBI" id="CHEBI:24875"/>
        <label>1</label>
    </ligand>
</feature>
<feature type="binding site" evidence="2">
    <location>
        <position position="113"/>
    </location>
    <ligand>
        <name>Fe cation</name>
        <dbReference type="ChEBI" id="CHEBI:24875"/>
        <label>2</label>
    </ligand>
</feature>
<keyword id="KW-0408">Iron</keyword>
<keyword id="KW-0479">Metal-binding</keyword>
<keyword id="KW-0514">Muscle protein</keyword>
<keyword id="KW-0561">Oxygen transport</keyword>
<keyword id="KW-0813">Transport</keyword>
<proteinExistence type="evidence at transcript level"/>
<organism>
    <name type="scientific">Riftia pachyptila</name>
    <name type="common">Vent tube worm</name>
    <dbReference type="NCBI Taxonomy" id="6426"/>
    <lineage>
        <taxon>Eukaryota</taxon>
        <taxon>Metazoa</taxon>
        <taxon>Spiralia</taxon>
        <taxon>Lophotrochozoa</taxon>
        <taxon>Annelida</taxon>
        <taxon>Polychaeta</taxon>
        <taxon>Sedentaria</taxon>
        <taxon>Canalipalpata</taxon>
        <taxon>Sabellida</taxon>
        <taxon>Siboglinidae</taxon>
        <taxon>Riftia</taxon>
    </lineage>
</organism>
<dbReference type="EMBL" id="EF648563">
    <property type="protein sequence ID" value="ABW24415.1"/>
    <property type="molecule type" value="mRNA"/>
</dbReference>
<dbReference type="SMR" id="A8STG1"/>
<dbReference type="GO" id="GO:0005506">
    <property type="term" value="F:iron ion binding"/>
    <property type="evidence" value="ECO:0007669"/>
    <property type="project" value="InterPro"/>
</dbReference>
<dbReference type="GO" id="GO:0005344">
    <property type="term" value="F:oxygen carrier activity"/>
    <property type="evidence" value="ECO:0007669"/>
    <property type="project" value="UniProtKB-KW"/>
</dbReference>
<dbReference type="CDD" id="cd12107">
    <property type="entry name" value="Hemerythrin"/>
    <property type="match status" value="1"/>
</dbReference>
<dbReference type="Gene3D" id="1.20.120.50">
    <property type="entry name" value="Hemerythrin-like"/>
    <property type="match status" value="1"/>
</dbReference>
<dbReference type="InterPro" id="IPR002063">
    <property type="entry name" value="Haemerythrin"/>
</dbReference>
<dbReference type="InterPro" id="IPR016131">
    <property type="entry name" value="Haemerythrin_Fe_BS"/>
</dbReference>
<dbReference type="InterPro" id="IPR050669">
    <property type="entry name" value="Hemerythrin"/>
</dbReference>
<dbReference type="InterPro" id="IPR012312">
    <property type="entry name" value="Hemerythrin-like"/>
</dbReference>
<dbReference type="InterPro" id="IPR035938">
    <property type="entry name" value="Hemerythrin-like_sf"/>
</dbReference>
<dbReference type="InterPro" id="IPR012827">
    <property type="entry name" value="Hemerythrin_metal-bd"/>
</dbReference>
<dbReference type="NCBIfam" id="TIGR02481">
    <property type="entry name" value="hemeryth_dom"/>
    <property type="match status" value="1"/>
</dbReference>
<dbReference type="NCBIfam" id="TIGR00058">
    <property type="entry name" value="Hemerythrin"/>
    <property type="match status" value="1"/>
</dbReference>
<dbReference type="PANTHER" id="PTHR37164">
    <property type="entry name" value="BACTERIOHEMERYTHRIN"/>
    <property type="match status" value="1"/>
</dbReference>
<dbReference type="PANTHER" id="PTHR37164:SF1">
    <property type="entry name" value="BACTERIOHEMERYTHRIN"/>
    <property type="match status" value="1"/>
</dbReference>
<dbReference type="Pfam" id="PF01814">
    <property type="entry name" value="Hemerythrin"/>
    <property type="match status" value="1"/>
</dbReference>
<dbReference type="PIRSF" id="PIRSF002033">
    <property type="entry name" value="Hemerythrin"/>
    <property type="match status" value="1"/>
</dbReference>
<dbReference type="PRINTS" id="PR00186">
    <property type="entry name" value="HEMERYTHRIN"/>
</dbReference>
<dbReference type="SUPFAM" id="SSF47188">
    <property type="entry name" value="Hemerythrin-like"/>
    <property type="match status" value="1"/>
</dbReference>
<dbReference type="PROSITE" id="PS00550">
    <property type="entry name" value="HEMERYTHRINS"/>
    <property type="match status" value="1"/>
</dbReference>
<comment type="function">
    <text evidence="1">Myohemerythrin is an oxygen-binding protein found in the retractor muscles of certain worms. The oxygen-binding site contains two iron atoms (By similarity).</text>
</comment>
<comment type="similarity">
    <text evidence="3">Belongs to the hemerythrin family.</text>
</comment>
<evidence type="ECO:0000250" key="1"/>
<evidence type="ECO:0000250" key="2">
    <source>
        <dbReference type="UniProtKB" id="P02244"/>
    </source>
</evidence>
<evidence type="ECO:0000305" key="3"/>
<accession>A8STG1</accession>
<sequence length="120" mass="13505">MSFEVPSPYVWDDSFRVAYDNLDSEHQALFKCIAKCAENRADAAALADLVKVTVDHFADEERMMAKTNFSGLPEHNKIHSEFVAKIKSLSAPLDDATVAFAKQWLVNHIKGIDFKYKGNL</sequence>
<protein>
    <recommendedName>
        <fullName>Myohemerythrin</fullName>
        <shortName>MHr</shortName>
    </recommendedName>
</protein>
<reference key="1">
    <citation type="journal article" date="2007" name="BMC Genomics">
        <title>Identification of proteins involved in the functioning of Riftia pachyptila symbiosis by Subtractive Suppression Hybridization.</title>
        <authorList>
            <person name="Sanchez S."/>
            <person name="Hourdez S."/>
            <person name="Lallier F.H."/>
        </authorList>
    </citation>
    <scope>NUCLEOTIDE SEQUENCE [LARGE SCALE MRNA]</scope>
</reference>